<feature type="chain" id="PRO_0000085840" description="Calcium-dependent protein kinase 3">
    <location>
        <begin position="1"/>
        <end position="538"/>
    </location>
</feature>
<feature type="domain" description="Protein kinase" evidence="4">
    <location>
        <begin position="112"/>
        <end position="367"/>
    </location>
</feature>
<feature type="domain" description="EF-hand 1" evidence="5">
    <location>
        <begin position="412"/>
        <end position="447"/>
    </location>
</feature>
<feature type="domain" description="EF-hand 2" evidence="5">
    <location>
        <begin position="450"/>
        <end position="481"/>
    </location>
</feature>
<feature type="domain" description="EF-hand 3" evidence="5">
    <location>
        <begin position="482"/>
        <end position="517"/>
    </location>
</feature>
<feature type="region of interest" description="Disordered" evidence="7">
    <location>
        <begin position="23"/>
        <end position="70"/>
    </location>
</feature>
<feature type="region of interest" description="J domain" evidence="2">
    <location>
        <begin position="387"/>
        <end position="422"/>
    </location>
</feature>
<feature type="short sequence motif" description="J domain autoinhibitory motif" evidence="2">
    <location>
        <begin position="387"/>
        <end position="395"/>
    </location>
</feature>
<feature type="short sequence motif" description="J domain EF-hand interaction motif" evidence="2">
    <location>
        <begin position="396"/>
        <end position="405"/>
    </location>
</feature>
<feature type="compositionally biased region" description="Basic and acidic residues" evidence="7">
    <location>
        <begin position="56"/>
        <end position="68"/>
    </location>
</feature>
<feature type="active site" description="Proton acceptor" evidence="4 6">
    <location>
        <position position="232"/>
    </location>
</feature>
<feature type="binding site" evidence="4">
    <location>
        <begin position="118"/>
        <end position="126"/>
    </location>
    <ligand>
        <name>ATP</name>
        <dbReference type="ChEBI" id="CHEBI:30616"/>
    </ligand>
</feature>
<feature type="binding site" evidence="4">
    <location>
        <position position="141"/>
    </location>
    <ligand>
        <name>ATP</name>
        <dbReference type="ChEBI" id="CHEBI:30616"/>
    </ligand>
</feature>
<feature type="binding site" evidence="5">
    <location>
        <position position="460"/>
    </location>
    <ligand>
        <name>Ca(2+)</name>
        <dbReference type="ChEBI" id="CHEBI:29108"/>
        <label>1</label>
        <note>low affinity</note>
    </ligand>
</feature>
<feature type="binding site" evidence="5">
    <location>
        <position position="462"/>
    </location>
    <ligand>
        <name>Ca(2+)</name>
        <dbReference type="ChEBI" id="CHEBI:29108"/>
        <label>1</label>
        <note>low affinity</note>
    </ligand>
</feature>
<feature type="binding site" evidence="5">
    <location>
        <position position="464"/>
    </location>
    <ligand>
        <name>Ca(2+)</name>
        <dbReference type="ChEBI" id="CHEBI:29108"/>
        <label>1</label>
        <note>low affinity</note>
    </ligand>
</feature>
<feature type="binding site" evidence="5">
    <location>
        <position position="466"/>
    </location>
    <ligand>
        <name>Ca(2+)</name>
        <dbReference type="ChEBI" id="CHEBI:29108"/>
        <label>1</label>
        <note>low affinity</note>
    </ligand>
</feature>
<feature type="binding site" evidence="5">
    <location>
        <position position="471"/>
    </location>
    <ligand>
        <name>Ca(2+)</name>
        <dbReference type="ChEBI" id="CHEBI:29108"/>
        <label>1</label>
        <note>low affinity</note>
    </ligand>
</feature>
<feature type="binding site" evidence="5">
    <location>
        <position position="495"/>
    </location>
    <ligand>
        <name>Ca(2+)</name>
        <dbReference type="ChEBI" id="CHEBI:29108"/>
        <label>2</label>
        <note>high affinity</note>
    </ligand>
</feature>
<feature type="binding site" evidence="5">
    <location>
        <position position="497"/>
    </location>
    <ligand>
        <name>Ca(2+)</name>
        <dbReference type="ChEBI" id="CHEBI:29108"/>
        <label>2</label>
        <note>high affinity</note>
    </ligand>
</feature>
<feature type="binding site" evidence="5">
    <location>
        <position position="499"/>
    </location>
    <ligand>
        <name>Ca(2+)</name>
        <dbReference type="ChEBI" id="CHEBI:29108"/>
        <label>2</label>
        <note>high affinity</note>
    </ligand>
</feature>
<feature type="binding site" evidence="5">
    <location>
        <position position="501"/>
    </location>
    <ligand>
        <name>Ca(2+)</name>
        <dbReference type="ChEBI" id="CHEBI:29108"/>
        <label>2</label>
        <note>high affinity</note>
    </ligand>
</feature>
<feature type="binding site" evidence="5">
    <location>
        <position position="506"/>
    </location>
    <ligand>
        <name>Ca(2+)</name>
        <dbReference type="ChEBI" id="CHEBI:29108"/>
        <label>2</label>
        <note>high affinity</note>
    </ligand>
</feature>
<keyword id="KW-0067">ATP-binding</keyword>
<keyword id="KW-0106">Calcium</keyword>
<keyword id="KW-0963">Cytoplasm</keyword>
<keyword id="KW-0217">Developmental protein</keyword>
<keyword id="KW-0221">Differentiation</keyword>
<keyword id="KW-0418">Kinase</keyword>
<keyword id="KW-0460">Magnesium</keyword>
<keyword id="KW-0479">Metal-binding</keyword>
<keyword id="KW-0547">Nucleotide-binding</keyword>
<keyword id="KW-1185">Reference proteome</keyword>
<keyword id="KW-0677">Repeat</keyword>
<keyword id="KW-0723">Serine/threonine-protein kinase</keyword>
<keyword id="KW-0808">Transferase</keyword>
<gene>
    <name evidence="8" type="primary">CDPK3</name>
    <name type="synonym">CPK3</name>
    <name type="ORF">PY06394</name>
</gene>
<organism>
    <name type="scientific">Plasmodium yoelii yoelii</name>
    <dbReference type="NCBI Taxonomy" id="73239"/>
    <lineage>
        <taxon>Eukaryota</taxon>
        <taxon>Sar</taxon>
        <taxon>Alveolata</taxon>
        <taxon>Apicomplexa</taxon>
        <taxon>Aconoidasida</taxon>
        <taxon>Haemosporida</taxon>
        <taxon>Plasmodiidae</taxon>
        <taxon>Plasmodium</taxon>
        <taxon>Plasmodium (Vinckeia)</taxon>
    </lineage>
</organism>
<name>CDPK3_PLAYO</name>
<proteinExistence type="inferred from homology"/>
<evidence type="ECO:0000250" key="1">
    <source>
        <dbReference type="UniProtKB" id="A0A509AFG4"/>
    </source>
</evidence>
<evidence type="ECO:0000250" key="2">
    <source>
        <dbReference type="UniProtKB" id="Q8IBS5"/>
    </source>
</evidence>
<evidence type="ECO:0000250" key="3">
    <source>
        <dbReference type="UniProtKB" id="Q9NJU9"/>
    </source>
</evidence>
<evidence type="ECO:0000255" key="4">
    <source>
        <dbReference type="PROSITE-ProRule" id="PRU00159"/>
    </source>
</evidence>
<evidence type="ECO:0000255" key="5">
    <source>
        <dbReference type="PROSITE-ProRule" id="PRU00448"/>
    </source>
</evidence>
<evidence type="ECO:0000255" key="6">
    <source>
        <dbReference type="PROSITE-ProRule" id="PRU10027"/>
    </source>
</evidence>
<evidence type="ECO:0000256" key="7">
    <source>
        <dbReference type="SAM" id="MobiDB-lite"/>
    </source>
</evidence>
<evidence type="ECO:0000305" key="8"/>
<reference key="1">
    <citation type="journal article" date="2002" name="Nature">
        <title>Genome sequence and comparative analysis of the model rodent malaria parasite Plasmodium yoelii yoelii.</title>
        <authorList>
            <person name="Carlton J.M."/>
            <person name="Angiuoli S.V."/>
            <person name="Suh B.B."/>
            <person name="Kooij T.W."/>
            <person name="Pertea M."/>
            <person name="Silva J.C."/>
            <person name="Ermolaeva M.D."/>
            <person name="Allen J.E."/>
            <person name="Selengut J.D."/>
            <person name="Koo H.L."/>
            <person name="Peterson J.D."/>
            <person name="Pop M."/>
            <person name="Kosack D.S."/>
            <person name="Shumway M.F."/>
            <person name="Bidwell S.L."/>
            <person name="Shallom S.J."/>
            <person name="van Aken S.E."/>
            <person name="Riedmuller S.B."/>
            <person name="Feldblyum T.V."/>
            <person name="Cho J.K."/>
            <person name="Quackenbush J."/>
            <person name="Sedegah M."/>
            <person name="Shoaibi A."/>
            <person name="Cummings L.M."/>
            <person name="Florens L."/>
            <person name="Yates J.R. III"/>
            <person name="Raine J.D."/>
            <person name="Sinden R.E."/>
            <person name="Harris M.A."/>
            <person name="Cunningham D.A."/>
            <person name="Preiser P.R."/>
            <person name="Bergman L.W."/>
            <person name="Vaidya A.B."/>
            <person name="van Lin L.H."/>
            <person name="Janse C.J."/>
            <person name="Waters A.P."/>
            <person name="Smith H.O."/>
            <person name="White O.R."/>
            <person name="Salzberg S.L."/>
            <person name="Venter J.C."/>
            <person name="Fraser C.M."/>
            <person name="Hoffman S.L."/>
            <person name="Gardner M.J."/>
            <person name="Carucci D.J."/>
        </authorList>
    </citation>
    <scope>NUCLEOTIDE SEQUENCE [LARGE SCALE GENOMIC DNA]</scope>
    <source>
        <strain>17XNL</strain>
    </source>
</reference>
<accession>Q7RAV5</accession>
<protein>
    <recommendedName>
        <fullName evidence="8">Calcium-dependent protein kinase 3</fullName>
        <ecNumber evidence="2">2.7.11.1</ecNumber>
    </recommendedName>
</protein>
<sequence>MNQLCVERSPNISTATAYIKGKPKKSIERIKKKKDSNKSIKSQHKFEGSKISNKNNELKDVKSKDPKNYESYLNKNTKHKDILLKSKRSDNFKFSRRGFILSFTGNLEDFYNLSEEPLGKGTYGCVYKATDKLLKIQRAVKVVSKKKLKNIPRFRQEIDIMKNLDHPNVIKLLETFEDEEQIYLIMDLCTGGELFDKIIKKGSFVEMYASFIMKQIFSVLNYLHIRNICHRDIKPENFLFYDKSTESLIKIIDFGLAAYFNDIDYEMKTKAGTPYYVAPQVLTGCYDYKCDLWSAGVLFYIILCGYPPFYGESDHEILSMVKKGKYNFKGKEWNNISDEAKDLIKRCLTIDSGKRINASEALKHPWFKKKKGSFNLDVKMDIHVLENFKNYALLLKLQKLAMTIIAQQSNDYDLQQLKAVFLYLDEDGKGNITKNQLKKGLENSGLKLPQNFDVLLDQIDSDGSGRIDYTEFLAAALDRKHLSKKLIYCAFRVFDVDNDGEITTAELAHVTFFVILFLHHVNDFPRLENCTKYIDLNA</sequence>
<comment type="function">
    <text evidence="1 2">Calcium-dependent protein kinase which acts as a sensor and effector of intracellular Ca(2+) levels probably in part downstream of cGMP-activated PKG kinase (By similarity). In the mosquito midgut, regulates the gliding motility of the ookinete which is essential for the ookinete to invade the midgut epithelium. However, another study showed that while required for ookinete invasion of the midgut epithelium, is not required for ookinete gliding motility (By similarity).</text>
</comment>
<comment type="catalytic activity">
    <reaction evidence="2">
        <text>L-seryl-[protein] + ATP = O-phospho-L-seryl-[protein] + ADP + H(+)</text>
        <dbReference type="Rhea" id="RHEA:17989"/>
        <dbReference type="Rhea" id="RHEA-COMP:9863"/>
        <dbReference type="Rhea" id="RHEA-COMP:11604"/>
        <dbReference type="ChEBI" id="CHEBI:15378"/>
        <dbReference type="ChEBI" id="CHEBI:29999"/>
        <dbReference type="ChEBI" id="CHEBI:30616"/>
        <dbReference type="ChEBI" id="CHEBI:83421"/>
        <dbReference type="ChEBI" id="CHEBI:456216"/>
        <dbReference type="EC" id="2.7.11.1"/>
    </reaction>
</comment>
<comment type="catalytic activity">
    <reaction evidence="2">
        <text>L-threonyl-[protein] + ATP = O-phospho-L-threonyl-[protein] + ADP + H(+)</text>
        <dbReference type="Rhea" id="RHEA:46608"/>
        <dbReference type="Rhea" id="RHEA-COMP:11060"/>
        <dbReference type="Rhea" id="RHEA-COMP:11605"/>
        <dbReference type="ChEBI" id="CHEBI:15378"/>
        <dbReference type="ChEBI" id="CHEBI:30013"/>
        <dbReference type="ChEBI" id="CHEBI:30616"/>
        <dbReference type="ChEBI" id="CHEBI:61977"/>
        <dbReference type="ChEBI" id="CHEBI:456216"/>
        <dbReference type="EC" id="2.7.11.1"/>
    </reaction>
</comment>
<comment type="cofactor">
    <cofactor evidence="2">
        <name>Mg(2+)</name>
        <dbReference type="ChEBI" id="CHEBI:18420"/>
    </cofactor>
</comment>
<comment type="activity regulation">
    <text evidence="2 3">Activated by calcium. Upon calcium binding to the EF-hand domain 2, the C-terminus of the junction domain (J domain) undergoes a conformational change which results in the dissociation of the pseudo-substrate inhibitory motif from the catalytic domain (By similarity). This, in turn, may facilitate the autophosphorylation of the activation loop at Thr-273, which leads to the kinase activation (By similarity).</text>
</comment>
<comment type="subcellular location">
    <subcellularLocation>
        <location evidence="1">Cytoplasm</location>
    </subcellularLocation>
</comment>
<comment type="domain">
    <text evidence="3">The EF-hand domain 1 cannot bind calcium due to the presence of a Lys instead of an Asp at position 429 and a Gln instead of a Glu at position 436 preventing calcium binding. The EF-hand domains 3 probably binds calcium constitutively when calcium levels are low, while the EF-hand domain 2 binds calcium following an increase in calcium levels.</text>
</comment>
<comment type="domain">
    <text evidence="2">The junction domain (J domain) is composed of 2 motifs that maintain the kinase inactive. The N-terminal autoinhibitory motif acts as a pseudosubstrate inhibiting the catalytic domain while the C-terminal motif binds the EF-hand domains.</text>
</comment>
<comment type="similarity">
    <text evidence="4">Belongs to the protein kinase superfamily. Ser/Thr protein kinase family. CDPK subfamily.</text>
</comment>
<comment type="caution">
    <text evidence="8">Orthologs in other Plasmodium species contain 4 EF-hand domains instead of 3 EF-hand domains as identified for this entry, therefore it might be possible that the displayed C-terminus sequence of P.yoelii CDPK3 is incorrect.</text>
</comment>
<dbReference type="EC" id="2.7.11.1" evidence="2"/>
<dbReference type="EMBL" id="AABL01002156">
    <property type="protein sequence ID" value="EAA18606.1"/>
    <property type="molecule type" value="Genomic_DNA"/>
</dbReference>
<dbReference type="SMR" id="Q7RAV5"/>
<dbReference type="FunCoup" id="Q7RAV5">
    <property type="interactions" value="5"/>
</dbReference>
<dbReference type="STRING" id="73239.Q7RAV5"/>
<dbReference type="PaxDb" id="73239-Q7RAV5"/>
<dbReference type="EnsemblProtists" id="EAA18606">
    <property type="protein sequence ID" value="EAA18606"/>
    <property type="gene ID" value="EAA18606"/>
</dbReference>
<dbReference type="InParanoid" id="Q7RAV5"/>
<dbReference type="Proteomes" id="UP000008553">
    <property type="component" value="Unassembled WGS sequence"/>
</dbReference>
<dbReference type="GO" id="GO:0005737">
    <property type="term" value="C:cytoplasm"/>
    <property type="evidence" value="ECO:0007669"/>
    <property type="project" value="UniProtKB-SubCell"/>
</dbReference>
<dbReference type="GO" id="GO:0005524">
    <property type="term" value="F:ATP binding"/>
    <property type="evidence" value="ECO:0007669"/>
    <property type="project" value="UniProtKB-KW"/>
</dbReference>
<dbReference type="GO" id="GO:0005509">
    <property type="term" value="F:calcium ion binding"/>
    <property type="evidence" value="ECO:0007669"/>
    <property type="project" value="InterPro"/>
</dbReference>
<dbReference type="GO" id="GO:0106310">
    <property type="term" value="F:protein serine kinase activity"/>
    <property type="evidence" value="ECO:0007669"/>
    <property type="project" value="RHEA"/>
</dbReference>
<dbReference type="GO" id="GO:0004674">
    <property type="term" value="F:protein serine/threonine kinase activity"/>
    <property type="evidence" value="ECO:0007669"/>
    <property type="project" value="UniProtKB-KW"/>
</dbReference>
<dbReference type="GO" id="GO:0030154">
    <property type="term" value="P:cell differentiation"/>
    <property type="evidence" value="ECO:0007669"/>
    <property type="project" value="UniProtKB-KW"/>
</dbReference>
<dbReference type="CDD" id="cd00051">
    <property type="entry name" value="EFh"/>
    <property type="match status" value="1"/>
</dbReference>
<dbReference type="CDD" id="cd05117">
    <property type="entry name" value="STKc_CAMK"/>
    <property type="match status" value="1"/>
</dbReference>
<dbReference type="FunFam" id="3.30.200.20:FF:000315">
    <property type="entry name" value="Calcium-dependent protein kinase 3"/>
    <property type="match status" value="1"/>
</dbReference>
<dbReference type="FunFam" id="1.10.238.10:FF:000178">
    <property type="entry name" value="Calmodulin-2 A"/>
    <property type="match status" value="1"/>
</dbReference>
<dbReference type="FunFam" id="1.10.510.10:FF:000739">
    <property type="entry name" value="CAMK/CDPK protein kinase"/>
    <property type="match status" value="1"/>
</dbReference>
<dbReference type="Gene3D" id="1.10.238.10">
    <property type="entry name" value="EF-hand"/>
    <property type="match status" value="2"/>
</dbReference>
<dbReference type="Gene3D" id="3.30.200.20">
    <property type="entry name" value="Phosphorylase Kinase, domain 1"/>
    <property type="match status" value="1"/>
</dbReference>
<dbReference type="Gene3D" id="1.10.510.10">
    <property type="entry name" value="Transferase(Phosphotransferase) domain 1"/>
    <property type="match status" value="1"/>
</dbReference>
<dbReference type="InterPro" id="IPR050205">
    <property type="entry name" value="CDPK_Ser/Thr_kinases"/>
</dbReference>
<dbReference type="InterPro" id="IPR011992">
    <property type="entry name" value="EF-hand-dom_pair"/>
</dbReference>
<dbReference type="InterPro" id="IPR018247">
    <property type="entry name" value="EF_Hand_1_Ca_BS"/>
</dbReference>
<dbReference type="InterPro" id="IPR002048">
    <property type="entry name" value="EF_hand_dom"/>
</dbReference>
<dbReference type="InterPro" id="IPR011009">
    <property type="entry name" value="Kinase-like_dom_sf"/>
</dbReference>
<dbReference type="InterPro" id="IPR000719">
    <property type="entry name" value="Prot_kinase_dom"/>
</dbReference>
<dbReference type="InterPro" id="IPR017441">
    <property type="entry name" value="Protein_kinase_ATP_BS"/>
</dbReference>
<dbReference type="InterPro" id="IPR008271">
    <property type="entry name" value="Ser/Thr_kinase_AS"/>
</dbReference>
<dbReference type="PANTHER" id="PTHR24349">
    <property type="entry name" value="SERINE/THREONINE-PROTEIN KINASE"/>
    <property type="match status" value="1"/>
</dbReference>
<dbReference type="Pfam" id="PF13202">
    <property type="entry name" value="EF-hand_5"/>
    <property type="match status" value="1"/>
</dbReference>
<dbReference type="Pfam" id="PF13499">
    <property type="entry name" value="EF-hand_7"/>
    <property type="match status" value="1"/>
</dbReference>
<dbReference type="Pfam" id="PF00069">
    <property type="entry name" value="Pkinase"/>
    <property type="match status" value="1"/>
</dbReference>
<dbReference type="SMART" id="SM00054">
    <property type="entry name" value="EFh"/>
    <property type="match status" value="3"/>
</dbReference>
<dbReference type="SMART" id="SM00220">
    <property type="entry name" value="S_TKc"/>
    <property type="match status" value="1"/>
</dbReference>
<dbReference type="SUPFAM" id="SSF47473">
    <property type="entry name" value="EF-hand"/>
    <property type="match status" value="1"/>
</dbReference>
<dbReference type="SUPFAM" id="SSF56112">
    <property type="entry name" value="Protein kinase-like (PK-like)"/>
    <property type="match status" value="1"/>
</dbReference>
<dbReference type="PROSITE" id="PS00018">
    <property type="entry name" value="EF_HAND_1"/>
    <property type="match status" value="2"/>
</dbReference>
<dbReference type="PROSITE" id="PS50222">
    <property type="entry name" value="EF_HAND_2"/>
    <property type="match status" value="3"/>
</dbReference>
<dbReference type="PROSITE" id="PS00107">
    <property type="entry name" value="PROTEIN_KINASE_ATP"/>
    <property type="match status" value="1"/>
</dbReference>
<dbReference type="PROSITE" id="PS50011">
    <property type="entry name" value="PROTEIN_KINASE_DOM"/>
    <property type="match status" value="1"/>
</dbReference>
<dbReference type="PROSITE" id="PS00108">
    <property type="entry name" value="PROTEIN_KINASE_ST"/>
    <property type="match status" value="1"/>
</dbReference>